<organismHost>
    <name type="scientific">Acanthamoeba polyphaga</name>
    <name type="common">Amoeba</name>
    <dbReference type="NCBI Taxonomy" id="5757"/>
</organismHost>
<organism>
    <name type="scientific">Acanthamoeba polyphaga mimivirus</name>
    <name type="common">APMV</name>
    <dbReference type="NCBI Taxonomy" id="212035"/>
    <lineage>
        <taxon>Viruses</taxon>
        <taxon>Varidnaviria</taxon>
        <taxon>Bamfordvirae</taxon>
        <taxon>Nucleocytoviricota</taxon>
        <taxon>Megaviricetes</taxon>
        <taxon>Imitervirales</taxon>
        <taxon>Mimiviridae</taxon>
        <taxon>Megamimivirinae</taxon>
        <taxon>Mimivirus</taxon>
        <taxon>Mimivirus bradfordmassiliense</taxon>
    </lineage>
</organism>
<feature type="chain" id="PRO_0000243955" description="Putative GMC-type oxidoreductase R135">
    <location>
        <begin position="1"/>
        <end position="702"/>
    </location>
</feature>
<feature type="transmembrane region" description="Helical" evidence="2">
    <location>
        <begin position="55"/>
        <end position="75"/>
    </location>
</feature>
<feature type="active site" evidence="1">
    <location>
        <position position="628"/>
    </location>
</feature>
<feature type="binding site" evidence="1">
    <location>
        <begin position="58"/>
        <end position="88"/>
    </location>
    <ligand>
        <name>FAD</name>
        <dbReference type="ChEBI" id="CHEBI:57692"/>
    </ligand>
</feature>
<feature type="strand" evidence="5">
    <location>
        <begin position="55"/>
        <end position="62"/>
    </location>
</feature>
<feature type="helix" evidence="5">
    <location>
        <begin position="66"/>
        <end position="78"/>
    </location>
</feature>
<feature type="strand" evidence="5">
    <location>
        <begin position="83"/>
        <end position="86"/>
    </location>
</feature>
<feature type="strand" evidence="5">
    <location>
        <begin position="88"/>
        <end position="90"/>
    </location>
</feature>
<feature type="helix" evidence="5">
    <location>
        <begin position="96"/>
        <end position="99"/>
    </location>
</feature>
<feature type="helix" evidence="5">
    <location>
        <begin position="101"/>
        <end position="105"/>
    </location>
</feature>
<feature type="turn" evidence="5">
    <location>
        <begin position="106"/>
        <end position="108"/>
    </location>
</feature>
<feature type="helix" evidence="5">
    <location>
        <begin position="111"/>
        <end position="113"/>
    </location>
</feature>
<feature type="helix" evidence="5">
    <location>
        <begin position="117"/>
        <end position="119"/>
    </location>
</feature>
<feature type="turn" evidence="5">
    <location>
        <begin position="121"/>
        <end position="123"/>
    </location>
</feature>
<feature type="strand" evidence="5">
    <location>
        <begin position="124"/>
        <end position="128"/>
    </location>
</feature>
<feature type="turn" evidence="5">
    <location>
        <begin position="133"/>
        <end position="137"/>
    </location>
</feature>
<feature type="strand" evidence="5">
    <location>
        <begin position="141"/>
        <end position="145"/>
    </location>
</feature>
<feature type="helix" evidence="5">
    <location>
        <begin position="150"/>
        <end position="153"/>
    </location>
</feature>
<feature type="helix" evidence="5">
    <location>
        <begin position="164"/>
        <end position="170"/>
    </location>
</feature>
<feature type="helix" evidence="5">
    <location>
        <begin position="177"/>
        <end position="191"/>
    </location>
</feature>
<feature type="helix" evidence="5">
    <location>
        <begin position="201"/>
        <end position="220"/>
    </location>
</feature>
<feature type="helix" evidence="5">
    <location>
        <begin position="230"/>
        <end position="232"/>
    </location>
</feature>
<feature type="strand" evidence="5">
    <location>
        <begin position="258"/>
        <end position="263"/>
    </location>
</feature>
<feature type="strand" evidence="5">
    <location>
        <begin position="266"/>
        <end position="271"/>
    </location>
</feature>
<feature type="strand" evidence="5">
    <location>
        <begin position="277"/>
        <end position="279"/>
    </location>
</feature>
<feature type="helix" evidence="5">
    <location>
        <begin position="282"/>
        <end position="286"/>
    </location>
</feature>
<feature type="turn" evidence="5">
    <location>
        <begin position="289"/>
        <end position="291"/>
    </location>
</feature>
<feature type="strand" evidence="5">
    <location>
        <begin position="296"/>
        <end position="298"/>
    </location>
</feature>
<feature type="helix" evidence="5">
    <location>
        <begin position="300"/>
        <end position="302"/>
    </location>
</feature>
<feature type="strand" evidence="5">
    <location>
        <begin position="305"/>
        <end position="308"/>
    </location>
</feature>
<feature type="strand" evidence="5">
    <location>
        <begin position="312"/>
        <end position="319"/>
    </location>
</feature>
<feature type="strand" evidence="5">
    <location>
        <begin position="322"/>
        <end position="329"/>
    </location>
</feature>
<feature type="strand" evidence="5">
    <location>
        <begin position="335"/>
        <end position="346"/>
    </location>
</feature>
<feature type="turn" evidence="5">
    <location>
        <begin position="350"/>
        <end position="352"/>
    </location>
</feature>
<feature type="helix" evidence="5">
    <location>
        <begin position="353"/>
        <end position="359"/>
    </location>
</feature>
<feature type="helix" evidence="5">
    <location>
        <begin position="365"/>
        <end position="370"/>
    </location>
</feature>
<feature type="turn" evidence="5">
    <location>
        <begin position="381"/>
        <end position="384"/>
    </location>
</feature>
<feature type="strand" evidence="5">
    <location>
        <begin position="385"/>
        <end position="388"/>
    </location>
</feature>
<feature type="strand" evidence="5">
    <location>
        <begin position="391"/>
        <end position="401"/>
    </location>
</feature>
<feature type="helix" evidence="5">
    <location>
        <begin position="403"/>
        <end position="409"/>
    </location>
</feature>
<feature type="turn" evidence="5">
    <location>
        <begin position="410"/>
        <end position="412"/>
    </location>
</feature>
<feature type="turn" evidence="5">
    <location>
        <begin position="417"/>
        <end position="421"/>
    </location>
</feature>
<feature type="strand" evidence="5">
    <location>
        <begin position="425"/>
        <end position="428"/>
    </location>
</feature>
<feature type="turn" evidence="5">
    <location>
        <begin position="439"/>
        <end position="443"/>
    </location>
</feature>
<feature type="strand" evidence="5">
    <location>
        <begin position="449"/>
        <end position="456"/>
    </location>
</feature>
<feature type="helix" evidence="5">
    <location>
        <begin position="461"/>
        <end position="467"/>
    </location>
</feature>
<feature type="strand" evidence="5">
    <location>
        <begin position="476"/>
        <end position="483"/>
    </location>
</feature>
<feature type="strand" evidence="5">
    <location>
        <begin position="490"/>
        <end position="493"/>
    </location>
</feature>
<feature type="strand" evidence="5">
    <location>
        <begin position="497"/>
        <end position="499"/>
    </location>
</feature>
<feature type="strand" evidence="5">
    <location>
        <begin position="505"/>
        <end position="507"/>
    </location>
</feature>
<feature type="helix" evidence="5">
    <location>
        <begin position="521"/>
        <end position="531"/>
    </location>
</feature>
<feature type="helix" evidence="5">
    <location>
        <begin position="533"/>
        <end position="558"/>
    </location>
</feature>
<feature type="strand" evidence="5">
    <location>
        <begin position="563"/>
        <end position="570"/>
    </location>
</feature>
<feature type="helix" evidence="5">
    <location>
        <begin position="572"/>
        <end position="585"/>
    </location>
</feature>
<feature type="helix" evidence="5">
    <location>
        <begin position="586"/>
        <end position="593"/>
    </location>
</feature>
<feature type="helix" evidence="5">
    <location>
        <begin position="595"/>
        <end position="598"/>
    </location>
</feature>
<feature type="helix" evidence="5">
    <location>
        <begin position="603"/>
        <end position="615"/>
    </location>
</feature>
<feature type="helix" evidence="5">
    <location>
        <begin position="617"/>
        <end position="621"/>
    </location>
</feature>
<feature type="strand" evidence="5">
    <location>
        <begin position="622"/>
        <end position="625"/>
    </location>
</feature>
<feature type="turn" evidence="5">
    <location>
        <begin position="635"/>
        <end position="637"/>
    </location>
</feature>
<feature type="strand" evidence="6">
    <location>
        <begin position="643"/>
        <end position="645"/>
    </location>
</feature>
<feature type="strand" evidence="5">
    <location>
        <begin position="649"/>
        <end position="653"/>
    </location>
</feature>
<feature type="helix" evidence="5">
    <location>
        <begin position="656"/>
        <end position="658"/>
    </location>
</feature>
<feature type="helix" evidence="5">
    <location>
        <begin position="668"/>
        <end position="683"/>
    </location>
</feature>
<feature type="helix" evidence="5">
    <location>
        <begin position="687"/>
        <end position="690"/>
    </location>
</feature>
<protein>
    <recommendedName>
        <fullName>Putative GMC-type oxidoreductase R135</fullName>
        <ecNumber>1.-.-.-</ecNumber>
    </recommendedName>
</protein>
<accession>Q5UPL2</accession>
<gene>
    <name type="ordered locus">MIMI_R135</name>
</gene>
<name>YR135_MIMIV</name>
<dbReference type="EC" id="1.-.-.-"/>
<dbReference type="EMBL" id="AY653733">
    <property type="protein sequence ID" value="AAV50410.1"/>
    <property type="molecule type" value="Genomic_DNA"/>
</dbReference>
<dbReference type="PDB" id="4Z24">
    <property type="method" value="X-ray"/>
    <property type="resolution" value="2.00 A"/>
    <property type="chains" value="A/B=51-702"/>
</dbReference>
<dbReference type="PDB" id="4Z25">
    <property type="method" value="X-ray"/>
    <property type="resolution" value="3.34 A"/>
    <property type="chains" value="A/B/C/D/E/F/G/H/I/J/K/L=51-702"/>
</dbReference>
<dbReference type="PDB" id="4Z26">
    <property type="method" value="X-ray"/>
    <property type="resolution" value="2.92 A"/>
    <property type="chains" value="A/B/C/D/E/F/G/H=51-702"/>
</dbReference>
<dbReference type="PDB" id="7YX3">
    <property type="method" value="EM"/>
    <property type="resolution" value="4.00 A"/>
    <property type="chains" value="A/B=1-702"/>
</dbReference>
<dbReference type="PDBsum" id="4Z24"/>
<dbReference type="PDBsum" id="4Z25"/>
<dbReference type="PDBsum" id="4Z26"/>
<dbReference type="PDBsum" id="7YX3"/>
<dbReference type="SMR" id="Q5UPL2"/>
<dbReference type="DIP" id="DIP-61553N"/>
<dbReference type="KEGG" id="vg:9924735"/>
<dbReference type="OrthoDB" id="2191at10239"/>
<dbReference type="EvolutionaryTrace" id="Q5UPL2"/>
<dbReference type="Proteomes" id="UP000001134">
    <property type="component" value="Genome"/>
</dbReference>
<dbReference type="GO" id="GO:0033644">
    <property type="term" value="C:host cell membrane"/>
    <property type="evidence" value="ECO:0007669"/>
    <property type="project" value="UniProtKB-SubCell"/>
</dbReference>
<dbReference type="GO" id="GO:0016020">
    <property type="term" value="C:membrane"/>
    <property type="evidence" value="ECO:0007669"/>
    <property type="project" value="UniProtKB-KW"/>
</dbReference>
<dbReference type="GO" id="GO:0044423">
    <property type="term" value="C:virion component"/>
    <property type="evidence" value="ECO:0007669"/>
    <property type="project" value="UniProtKB-KW"/>
</dbReference>
<dbReference type="GO" id="GO:0050660">
    <property type="term" value="F:flavin adenine dinucleotide binding"/>
    <property type="evidence" value="ECO:0007669"/>
    <property type="project" value="InterPro"/>
</dbReference>
<dbReference type="GO" id="GO:0042802">
    <property type="term" value="F:identical protein binding"/>
    <property type="evidence" value="ECO:0000353"/>
    <property type="project" value="IntAct"/>
</dbReference>
<dbReference type="GO" id="GO:0016614">
    <property type="term" value="F:oxidoreductase activity, acting on CH-OH group of donors"/>
    <property type="evidence" value="ECO:0007669"/>
    <property type="project" value="InterPro"/>
</dbReference>
<dbReference type="Gene3D" id="3.50.50.60">
    <property type="entry name" value="FAD/NAD(P)-binding domain"/>
    <property type="match status" value="3"/>
</dbReference>
<dbReference type="InterPro" id="IPR036188">
    <property type="entry name" value="FAD/NAD-bd_sf"/>
</dbReference>
<dbReference type="InterPro" id="IPR012132">
    <property type="entry name" value="GMC_OxRdtase"/>
</dbReference>
<dbReference type="InterPro" id="IPR000172">
    <property type="entry name" value="GMC_OxRdtase_N"/>
</dbReference>
<dbReference type="InterPro" id="IPR007867">
    <property type="entry name" value="GMC_OxRtase_C"/>
</dbReference>
<dbReference type="PANTHER" id="PTHR11552:SF147">
    <property type="entry name" value="CHOLINE DEHYDROGENASE, MITOCHONDRIAL"/>
    <property type="match status" value="1"/>
</dbReference>
<dbReference type="PANTHER" id="PTHR11552">
    <property type="entry name" value="GLUCOSE-METHANOL-CHOLINE GMC OXIDOREDUCTASE"/>
    <property type="match status" value="1"/>
</dbReference>
<dbReference type="Pfam" id="PF05199">
    <property type="entry name" value="GMC_oxred_C"/>
    <property type="match status" value="1"/>
</dbReference>
<dbReference type="Pfam" id="PF00732">
    <property type="entry name" value="GMC_oxred_N"/>
    <property type="match status" value="1"/>
</dbReference>
<dbReference type="PIRSF" id="PIRSF000137">
    <property type="entry name" value="Alcohol_oxidase"/>
    <property type="match status" value="1"/>
</dbReference>
<dbReference type="SUPFAM" id="SSF51905">
    <property type="entry name" value="FAD/NAD(P)-binding domain"/>
    <property type="match status" value="1"/>
</dbReference>
<dbReference type="PROSITE" id="PS00624">
    <property type="entry name" value="GMC_OXRED_2"/>
    <property type="match status" value="1"/>
</dbReference>
<proteinExistence type="evidence at protein level"/>
<sequence length="702" mass="76947">MKNKECCKCYNPCEKICVNYSTTDVAFERPNPCKPIPCKPTPIPCDPCHNTKDNLTGDIVIIGAGAAGSLLAHYLARFSNMKIILLEAGHSHFNDPVVTDPMGFFGKYNPPNENISMSQNPSYSWQGAQEPNTGAYGNRPIIAHGMGFGGSTMINRLNLVVGGRTVFDNDWPVGWKYDDVKNYFRRVLVDINPVRDNTKASITSVALDALRIIAEQQIASGEPVDFLLNKATGNVPNVEKTTPDAVPLNLNDYEGVNSVVAFSSFYMGVNQLSDGNYIRKYAGNTYLNRNYVDENGRGIGKFSGLRVVSDAVVDRIIFKGNRAVGVNYIDREGIMHYVKVNKEVVVTSGAFYTPTILQRSGIGDFTYLSSIGVKNLVYNNPLVGTGLKNHYSPVTITRVHGEPSEVSRFLSNMAANPTNMGFKGLAELGFHRLDPNKPANANTVTYRKYQLMMTAGVGIPAEQQYLSGLSPSSNNLFTLIADDIRFAPEGYIKIGTPNIPRDVPKIFFNTFVTYTPTSAPADQQWPIAQKTLAPLISALLGYDIIYQTLMSMNQTARDSGFQVSLEMVYPLNDLIYKLHNGLATYGANWWHYFVPTLVGDDTPAGREFADTLSKLSYYPRVGAHLDSHQGCSCSIGRTVDSNLKVIGTQNVRVADLSAAAFPPGGNTWATASMIGARAVDLILGFPYLRDLPVNDVPILNVN</sequence>
<evidence type="ECO:0000250" key="1"/>
<evidence type="ECO:0000255" key="2"/>
<evidence type="ECO:0000269" key="3">
    <source>
    </source>
</evidence>
<evidence type="ECO:0000305" key="4"/>
<evidence type="ECO:0007829" key="5">
    <source>
        <dbReference type="PDB" id="4Z24"/>
    </source>
</evidence>
<evidence type="ECO:0007829" key="6">
    <source>
        <dbReference type="PDB" id="4Z25"/>
    </source>
</evidence>
<comment type="cofactor">
    <cofactor evidence="1">
        <name>FAD</name>
        <dbReference type="ChEBI" id="CHEBI:57692"/>
    </cofactor>
</comment>
<comment type="interaction">
    <interactant intactId="EBI-16157702">
        <id>Q5UPL2</id>
    </interactant>
    <interactant intactId="EBI-16157702">
        <id>Q5UPL2</id>
        <label>MIMI_R135</label>
    </interactant>
    <organismsDiffer>false</organismsDiffer>
    <experiments>2</experiments>
</comment>
<comment type="subcellular location">
    <subcellularLocation>
        <location evidence="3">Virion</location>
    </subcellularLocation>
    <subcellularLocation>
        <location evidence="3">Host membrane</location>
        <topology evidence="3">Single-pass membrane protein</topology>
    </subcellularLocation>
</comment>
<comment type="similarity">
    <text evidence="4">Belongs to the GMC oxidoreductase family.</text>
</comment>
<keyword id="KW-0002">3D-structure</keyword>
<keyword id="KW-0274">FAD</keyword>
<keyword id="KW-0285">Flavoprotein</keyword>
<keyword id="KW-1043">Host membrane</keyword>
<keyword id="KW-0472">Membrane</keyword>
<keyword id="KW-0560">Oxidoreductase</keyword>
<keyword id="KW-1185">Reference proteome</keyword>
<keyword id="KW-0812">Transmembrane</keyword>
<keyword id="KW-1133">Transmembrane helix</keyword>
<keyword id="KW-0946">Virion</keyword>
<reference key="1">
    <citation type="journal article" date="2004" name="Science">
        <title>The 1.2-megabase genome sequence of Mimivirus.</title>
        <authorList>
            <person name="Raoult D."/>
            <person name="Audic S."/>
            <person name="Robert C."/>
            <person name="Abergel C."/>
            <person name="Renesto P."/>
            <person name="Ogata H."/>
            <person name="La Scola B."/>
            <person name="Susan M."/>
            <person name="Claverie J.-M."/>
        </authorList>
    </citation>
    <scope>NUCLEOTIDE SEQUENCE [LARGE SCALE GENOMIC DNA]</scope>
    <source>
        <strain>Rowbotham-Bradford</strain>
    </source>
</reference>
<reference key="2">
    <citation type="journal article" date="2006" name="J. Virol.">
        <title>Mimivirus giant particles incorporate a large fraction of anonymous and unique gene products.</title>
        <authorList>
            <person name="Renesto P."/>
            <person name="Abergel C."/>
            <person name="Decloquement P."/>
            <person name="Moinier D."/>
            <person name="Azza S."/>
            <person name="Ogata H."/>
            <person name="Fourquet P."/>
            <person name="Gorvel J.-P."/>
            <person name="Claverie J.-M."/>
            <person name="Raoult D."/>
        </authorList>
    </citation>
    <scope>IDENTIFICATION BY MASS SPECTROMETRY [LARGE SCALE ANALYSIS]</scope>
    <scope>SUBCELLULAR LOCATION</scope>
</reference>